<organism>
    <name type="scientific">Hamiltonella defensa subsp. Acyrthosiphon pisum (strain 5AT)</name>
    <dbReference type="NCBI Taxonomy" id="572265"/>
    <lineage>
        <taxon>Bacteria</taxon>
        <taxon>Pseudomonadati</taxon>
        <taxon>Pseudomonadota</taxon>
        <taxon>Gammaproteobacteria</taxon>
        <taxon>Enterobacterales</taxon>
        <taxon>Enterobacteriaceae</taxon>
        <taxon>aphid secondary symbionts</taxon>
        <taxon>Candidatus Hamiltonella</taxon>
    </lineage>
</organism>
<feature type="chain" id="PRO_1000216158" description="Ribosomal RNA small subunit methyltransferase C">
    <location>
        <begin position="1"/>
        <end position="336"/>
    </location>
</feature>
<sequence length="336" mass="37817">MSDLTPPSQILLRHTREFAERSVIFSGDLQDLLPAQFNAKQIRVHTQEYHHWRLLSPVLKNDIQFGVLPSEDLVSKTDTVIFYWPKNKAQAQFQLEHLCSLFPSQTNIFIVGENRSGIGSAKDLLAENVGLHKMDAARRCSLYYGCLKQKPVFNMESQWRRYQVKDVQIKTLPGVFSANQLDEGSQLLLSSFDIPLSGKVLDLACGAGVLGTILARQSPQIELTLSDVNAAALESSRANLAVNHIKARVVPSDLYSDIPERFNLILSNLPFHKGLKTDIKMIEKCIEEAPGHLYKGGKLRLVANAFLPYPKLLNRTFGHYEVLTQNARFKVYQATL</sequence>
<comment type="function">
    <text evidence="1">Specifically methylates the guanine in position 1207 of 16S rRNA in the 30S particle.</text>
</comment>
<comment type="catalytic activity">
    <reaction evidence="1">
        <text>guanosine(1207) in 16S rRNA + S-adenosyl-L-methionine = N(2)-methylguanosine(1207) in 16S rRNA + S-adenosyl-L-homocysteine + H(+)</text>
        <dbReference type="Rhea" id="RHEA:42736"/>
        <dbReference type="Rhea" id="RHEA-COMP:10213"/>
        <dbReference type="Rhea" id="RHEA-COMP:10214"/>
        <dbReference type="ChEBI" id="CHEBI:15378"/>
        <dbReference type="ChEBI" id="CHEBI:57856"/>
        <dbReference type="ChEBI" id="CHEBI:59789"/>
        <dbReference type="ChEBI" id="CHEBI:74269"/>
        <dbReference type="ChEBI" id="CHEBI:74481"/>
        <dbReference type="EC" id="2.1.1.172"/>
    </reaction>
</comment>
<comment type="subunit">
    <text evidence="1">Monomer.</text>
</comment>
<comment type="subcellular location">
    <subcellularLocation>
        <location evidence="1">Cytoplasm</location>
    </subcellularLocation>
</comment>
<comment type="similarity">
    <text evidence="1">Belongs to the methyltransferase superfamily. RsmC family.</text>
</comment>
<gene>
    <name evidence="1" type="primary">rsmC</name>
    <name type="ordered locus">HDEF_2301</name>
</gene>
<name>RSMC_HAMD5</name>
<accession>C4K8X0</accession>
<proteinExistence type="inferred from homology"/>
<dbReference type="EC" id="2.1.1.172" evidence="1"/>
<dbReference type="EMBL" id="CP001277">
    <property type="protein sequence ID" value="ACQ68839.1"/>
    <property type="molecule type" value="Genomic_DNA"/>
</dbReference>
<dbReference type="RefSeq" id="WP_015874559.1">
    <property type="nucleotide sequence ID" value="NC_012751.1"/>
</dbReference>
<dbReference type="SMR" id="C4K8X0"/>
<dbReference type="STRING" id="572265.HDEF_2301"/>
<dbReference type="GeneID" id="66261793"/>
<dbReference type="KEGG" id="hde:HDEF_2301"/>
<dbReference type="eggNOG" id="COG2813">
    <property type="taxonomic scope" value="Bacteria"/>
</dbReference>
<dbReference type="HOGENOM" id="CLU_049581_0_1_6"/>
<dbReference type="Proteomes" id="UP000002334">
    <property type="component" value="Chromosome"/>
</dbReference>
<dbReference type="GO" id="GO:0005737">
    <property type="term" value="C:cytoplasm"/>
    <property type="evidence" value="ECO:0007669"/>
    <property type="project" value="UniProtKB-SubCell"/>
</dbReference>
<dbReference type="GO" id="GO:0052914">
    <property type="term" value="F:16S rRNA (guanine(1207)-N(2))-methyltransferase activity"/>
    <property type="evidence" value="ECO:0007669"/>
    <property type="project" value="UniProtKB-EC"/>
</dbReference>
<dbReference type="CDD" id="cd02440">
    <property type="entry name" value="AdoMet_MTases"/>
    <property type="match status" value="1"/>
</dbReference>
<dbReference type="Gene3D" id="3.40.50.150">
    <property type="entry name" value="Vaccinia Virus protein VP39"/>
    <property type="match status" value="2"/>
</dbReference>
<dbReference type="HAMAP" id="MF_01862">
    <property type="entry name" value="16SrRNA_methyltr_C"/>
    <property type="match status" value="1"/>
</dbReference>
<dbReference type="InterPro" id="IPR013675">
    <property type="entry name" value="Mtase_sm_N"/>
</dbReference>
<dbReference type="InterPro" id="IPR023543">
    <property type="entry name" value="rRNA_ssu_MeTfrase_C"/>
</dbReference>
<dbReference type="InterPro" id="IPR046977">
    <property type="entry name" value="RsmC/RlmG"/>
</dbReference>
<dbReference type="InterPro" id="IPR029063">
    <property type="entry name" value="SAM-dependent_MTases_sf"/>
</dbReference>
<dbReference type="InterPro" id="IPR007848">
    <property type="entry name" value="Small_mtfrase_dom"/>
</dbReference>
<dbReference type="NCBIfam" id="NF007023">
    <property type="entry name" value="PRK09489.1"/>
    <property type="match status" value="1"/>
</dbReference>
<dbReference type="PANTHER" id="PTHR47816">
    <property type="entry name" value="RIBOSOMAL RNA SMALL SUBUNIT METHYLTRANSFERASE C"/>
    <property type="match status" value="1"/>
</dbReference>
<dbReference type="PANTHER" id="PTHR47816:SF4">
    <property type="entry name" value="RIBOSOMAL RNA SMALL SUBUNIT METHYLTRANSFERASE C"/>
    <property type="match status" value="1"/>
</dbReference>
<dbReference type="Pfam" id="PF05175">
    <property type="entry name" value="MTS"/>
    <property type="match status" value="1"/>
</dbReference>
<dbReference type="Pfam" id="PF08468">
    <property type="entry name" value="MTS_N"/>
    <property type="match status" value="1"/>
</dbReference>
<dbReference type="SUPFAM" id="SSF53335">
    <property type="entry name" value="S-adenosyl-L-methionine-dependent methyltransferases"/>
    <property type="match status" value="1"/>
</dbReference>
<keyword id="KW-0963">Cytoplasm</keyword>
<keyword id="KW-0489">Methyltransferase</keyword>
<keyword id="KW-0698">rRNA processing</keyword>
<keyword id="KW-0949">S-adenosyl-L-methionine</keyword>
<keyword id="KW-0808">Transferase</keyword>
<evidence type="ECO:0000255" key="1">
    <source>
        <dbReference type="HAMAP-Rule" id="MF_01862"/>
    </source>
</evidence>
<reference key="1">
    <citation type="journal article" date="2009" name="Proc. Natl. Acad. Sci. U.S.A.">
        <title>Hamiltonella defensa, genome evolution of protective bacterial endosymbiont from pathogenic ancestors.</title>
        <authorList>
            <person name="Degnan P.H."/>
            <person name="Yu Y."/>
            <person name="Sisneros N."/>
            <person name="Wing R.A."/>
            <person name="Moran N.A."/>
        </authorList>
    </citation>
    <scope>NUCLEOTIDE SEQUENCE [LARGE SCALE GENOMIC DNA]</scope>
    <source>
        <strain>5AT</strain>
    </source>
</reference>
<protein>
    <recommendedName>
        <fullName evidence="1">Ribosomal RNA small subunit methyltransferase C</fullName>
        <ecNumber evidence="1">2.1.1.172</ecNumber>
    </recommendedName>
    <alternativeName>
        <fullName evidence="1">16S rRNA m2G1207 methyltransferase</fullName>
    </alternativeName>
    <alternativeName>
        <fullName evidence="1">rRNA (guanine-N(2)-)-methyltransferase RsmC</fullName>
    </alternativeName>
</protein>